<accession>Q38UE9</accession>
<sequence length="462" mass="50731">MPTTVTEFDTITAISTPPGEGAISIVRLSGDDSLAIIKRVYRGKDLDKVASHTINYGHIIDPKTDAVVDEVMVSVMRAPKTFTREDVIEINCHGGIVATNRILQLLMSYGARMAEPGEFTKRAFLNGRIDLTQAESVMDLIRAKTDRAMQVAVDQLDGSLTHLIKNLRQEILEVLAQVEVNIDYPEYDTDEMTTRILLEKAELVKGRIGELLQTAQQGKVLREGLATAIVGRPNVGKSSLLNHLLHEDKAIVTDVAGTTRDVLEEYVNVRGVPLKLVDTAGIHDTEDKVEKIGVERSRAAITKADLILLVLNQSEPLTIEDRELITATTDKKRIIILNKTDLPNQLDLDELQTLVRADEVIQTSILTSEGVTDLEAQIAKLFFGGIENSQSTVMITNARQIGLLNQAQQSLDEVISGIAAGMPVDLVQIDMTNCWDKLGEITGDSAPDELITELFSQFCLGK</sequence>
<feature type="chain" id="PRO_1000060048" description="tRNA modification GTPase MnmE">
    <location>
        <begin position="1"/>
        <end position="462"/>
    </location>
</feature>
<feature type="domain" description="TrmE-type G">
    <location>
        <begin position="224"/>
        <end position="383"/>
    </location>
</feature>
<feature type="binding site" evidence="1">
    <location>
        <position position="27"/>
    </location>
    <ligand>
        <name>(6S)-5-formyl-5,6,7,8-tetrahydrofolate</name>
        <dbReference type="ChEBI" id="CHEBI:57457"/>
    </ligand>
</feature>
<feature type="binding site" evidence="1">
    <location>
        <position position="89"/>
    </location>
    <ligand>
        <name>(6S)-5-formyl-5,6,7,8-tetrahydrofolate</name>
        <dbReference type="ChEBI" id="CHEBI:57457"/>
    </ligand>
</feature>
<feature type="binding site" evidence="1">
    <location>
        <position position="128"/>
    </location>
    <ligand>
        <name>(6S)-5-formyl-5,6,7,8-tetrahydrofolate</name>
        <dbReference type="ChEBI" id="CHEBI:57457"/>
    </ligand>
</feature>
<feature type="binding site" evidence="1">
    <location>
        <begin position="234"/>
        <end position="239"/>
    </location>
    <ligand>
        <name>GTP</name>
        <dbReference type="ChEBI" id="CHEBI:37565"/>
    </ligand>
</feature>
<feature type="binding site" evidence="1">
    <location>
        <position position="234"/>
    </location>
    <ligand>
        <name>K(+)</name>
        <dbReference type="ChEBI" id="CHEBI:29103"/>
    </ligand>
</feature>
<feature type="binding site" evidence="1">
    <location>
        <position position="238"/>
    </location>
    <ligand>
        <name>Mg(2+)</name>
        <dbReference type="ChEBI" id="CHEBI:18420"/>
    </ligand>
</feature>
<feature type="binding site" evidence="1">
    <location>
        <begin position="253"/>
        <end position="259"/>
    </location>
    <ligand>
        <name>GTP</name>
        <dbReference type="ChEBI" id="CHEBI:37565"/>
    </ligand>
</feature>
<feature type="binding site" evidence="1">
    <location>
        <position position="253"/>
    </location>
    <ligand>
        <name>K(+)</name>
        <dbReference type="ChEBI" id="CHEBI:29103"/>
    </ligand>
</feature>
<feature type="binding site" evidence="1">
    <location>
        <position position="255"/>
    </location>
    <ligand>
        <name>K(+)</name>
        <dbReference type="ChEBI" id="CHEBI:29103"/>
    </ligand>
</feature>
<feature type="binding site" evidence="1">
    <location>
        <position position="258"/>
    </location>
    <ligand>
        <name>K(+)</name>
        <dbReference type="ChEBI" id="CHEBI:29103"/>
    </ligand>
</feature>
<feature type="binding site" evidence="1">
    <location>
        <position position="259"/>
    </location>
    <ligand>
        <name>Mg(2+)</name>
        <dbReference type="ChEBI" id="CHEBI:18420"/>
    </ligand>
</feature>
<feature type="binding site" evidence="1">
    <location>
        <begin position="278"/>
        <end position="281"/>
    </location>
    <ligand>
        <name>GTP</name>
        <dbReference type="ChEBI" id="CHEBI:37565"/>
    </ligand>
</feature>
<feature type="binding site" evidence="1">
    <location>
        <position position="462"/>
    </location>
    <ligand>
        <name>(6S)-5-formyl-5,6,7,8-tetrahydrofolate</name>
        <dbReference type="ChEBI" id="CHEBI:57457"/>
    </ligand>
</feature>
<proteinExistence type="inferred from homology"/>
<dbReference type="EC" id="3.6.-.-" evidence="1"/>
<dbReference type="EMBL" id="CR936503">
    <property type="protein sequence ID" value="CAI56186.1"/>
    <property type="molecule type" value="Genomic_DNA"/>
</dbReference>
<dbReference type="RefSeq" id="WP_011375560.1">
    <property type="nucleotide sequence ID" value="NC_007576.1"/>
</dbReference>
<dbReference type="SMR" id="Q38UE9"/>
<dbReference type="STRING" id="314315.LCA_1880"/>
<dbReference type="KEGG" id="lsa:LCA_1880"/>
<dbReference type="eggNOG" id="COG0486">
    <property type="taxonomic scope" value="Bacteria"/>
</dbReference>
<dbReference type="HOGENOM" id="CLU_019624_4_1_9"/>
<dbReference type="OrthoDB" id="9805918at2"/>
<dbReference type="Proteomes" id="UP000002707">
    <property type="component" value="Chromosome"/>
</dbReference>
<dbReference type="GO" id="GO:0005829">
    <property type="term" value="C:cytosol"/>
    <property type="evidence" value="ECO:0007669"/>
    <property type="project" value="TreeGrafter"/>
</dbReference>
<dbReference type="GO" id="GO:0005525">
    <property type="term" value="F:GTP binding"/>
    <property type="evidence" value="ECO:0007669"/>
    <property type="project" value="UniProtKB-UniRule"/>
</dbReference>
<dbReference type="GO" id="GO:0003924">
    <property type="term" value="F:GTPase activity"/>
    <property type="evidence" value="ECO:0007669"/>
    <property type="project" value="UniProtKB-UniRule"/>
</dbReference>
<dbReference type="GO" id="GO:0046872">
    <property type="term" value="F:metal ion binding"/>
    <property type="evidence" value="ECO:0007669"/>
    <property type="project" value="UniProtKB-KW"/>
</dbReference>
<dbReference type="GO" id="GO:0030488">
    <property type="term" value="P:tRNA methylation"/>
    <property type="evidence" value="ECO:0007669"/>
    <property type="project" value="TreeGrafter"/>
</dbReference>
<dbReference type="GO" id="GO:0002098">
    <property type="term" value="P:tRNA wobble uridine modification"/>
    <property type="evidence" value="ECO:0007669"/>
    <property type="project" value="TreeGrafter"/>
</dbReference>
<dbReference type="CDD" id="cd04164">
    <property type="entry name" value="trmE"/>
    <property type="match status" value="1"/>
</dbReference>
<dbReference type="CDD" id="cd14858">
    <property type="entry name" value="TrmE_N"/>
    <property type="match status" value="1"/>
</dbReference>
<dbReference type="FunFam" id="3.30.1360.120:FF:000003">
    <property type="entry name" value="tRNA modification GTPase MnmE"/>
    <property type="match status" value="1"/>
</dbReference>
<dbReference type="FunFam" id="3.40.50.300:FF:000494">
    <property type="entry name" value="tRNA modification GTPase MnmE"/>
    <property type="match status" value="1"/>
</dbReference>
<dbReference type="Gene3D" id="3.40.50.300">
    <property type="entry name" value="P-loop containing nucleotide triphosphate hydrolases"/>
    <property type="match status" value="1"/>
</dbReference>
<dbReference type="Gene3D" id="3.30.1360.120">
    <property type="entry name" value="Probable tRNA modification gtpase trme, domain 1"/>
    <property type="match status" value="1"/>
</dbReference>
<dbReference type="Gene3D" id="1.20.120.430">
    <property type="entry name" value="tRNA modification GTPase MnmE domain 2"/>
    <property type="match status" value="1"/>
</dbReference>
<dbReference type="HAMAP" id="MF_00379">
    <property type="entry name" value="GTPase_MnmE"/>
    <property type="match status" value="1"/>
</dbReference>
<dbReference type="InterPro" id="IPR031168">
    <property type="entry name" value="G_TrmE"/>
</dbReference>
<dbReference type="InterPro" id="IPR006073">
    <property type="entry name" value="GTP-bd"/>
</dbReference>
<dbReference type="InterPro" id="IPR018948">
    <property type="entry name" value="GTP-bd_TrmE_N"/>
</dbReference>
<dbReference type="InterPro" id="IPR004520">
    <property type="entry name" value="GTPase_MnmE"/>
</dbReference>
<dbReference type="InterPro" id="IPR027368">
    <property type="entry name" value="MnmE_dom2"/>
</dbReference>
<dbReference type="InterPro" id="IPR025867">
    <property type="entry name" value="MnmE_helical"/>
</dbReference>
<dbReference type="InterPro" id="IPR027417">
    <property type="entry name" value="P-loop_NTPase"/>
</dbReference>
<dbReference type="InterPro" id="IPR005225">
    <property type="entry name" value="Small_GTP-bd"/>
</dbReference>
<dbReference type="InterPro" id="IPR027266">
    <property type="entry name" value="TrmE/GcvT_dom1"/>
</dbReference>
<dbReference type="NCBIfam" id="TIGR00450">
    <property type="entry name" value="mnmE_trmE_thdF"/>
    <property type="match status" value="1"/>
</dbReference>
<dbReference type="NCBIfam" id="NF003661">
    <property type="entry name" value="PRK05291.1-3"/>
    <property type="match status" value="1"/>
</dbReference>
<dbReference type="NCBIfam" id="TIGR00231">
    <property type="entry name" value="small_GTP"/>
    <property type="match status" value="1"/>
</dbReference>
<dbReference type="PANTHER" id="PTHR42714">
    <property type="entry name" value="TRNA MODIFICATION GTPASE GTPBP3"/>
    <property type="match status" value="1"/>
</dbReference>
<dbReference type="PANTHER" id="PTHR42714:SF2">
    <property type="entry name" value="TRNA MODIFICATION GTPASE GTPBP3, MITOCHONDRIAL"/>
    <property type="match status" value="1"/>
</dbReference>
<dbReference type="Pfam" id="PF01926">
    <property type="entry name" value="MMR_HSR1"/>
    <property type="match status" value="1"/>
</dbReference>
<dbReference type="Pfam" id="PF12631">
    <property type="entry name" value="MnmE_helical"/>
    <property type="match status" value="1"/>
</dbReference>
<dbReference type="Pfam" id="PF10396">
    <property type="entry name" value="TrmE_N"/>
    <property type="match status" value="1"/>
</dbReference>
<dbReference type="SUPFAM" id="SSF52540">
    <property type="entry name" value="P-loop containing nucleoside triphosphate hydrolases"/>
    <property type="match status" value="1"/>
</dbReference>
<dbReference type="SUPFAM" id="SSF116878">
    <property type="entry name" value="TrmE connector domain"/>
    <property type="match status" value="1"/>
</dbReference>
<dbReference type="PROSITE" id="PS51709">
    <property type="entry name" value="G_TRME"/>
    <property type="match status" value="1"/>
</dbReference>
<evidence type="ECO:0000255" key="1">
    <source>
        <dbReference type="HAMAP-Rule" id="MF_00379"/>
    </source>
</evidence>
<comment type="function">
    <text evidence="1">Exhibits a very high intrinsic GTPase hydrolysis rate. Involved in the addition of a carboxymethylaminomethyl (cmnm) group at the wobble position (U34) of certain tRNAs, forming tRNA-cmnm(5)s(2)U34.</text>
</comment>
<comment type="cofactor">
    <cofactor evidence="1">
        <name>K(+)</name>
        <dbReference type="ChEBI" id="CHEBI:29103"/>
    </cofactor>
    <text evidence="1">Binds 1 potassium ion per subunit.</text>
</comment>
<comment type="subunit">
    <text evidence="1">Homodimer. Heterotetramer of two MnmE and two MnmG subunits.</text>
</comment>
<comment type="subcellular location">
    <subcellularLocation>
        <location evidence="1">Cytoplasm</location>
    </subcellularLocation>
</comment>
<comment type="similarity">
    <text evidence="1">Belongs to the TRAFAC class TrmE-Era-EngA-EngB-Septin-like GTPase superfamily. TrmE GTPase family.</text>
</comment>
<organism>
    <name type="scientific">Latilactobacillus sakei subsp. sakei (strain 23K)</name>
    <name type="common">Lactobacillus sakei subsp. sakei</name>
    <dbReference type="NCBI Taxonomy" id="314315"/>
    <lineage>
        <taxon>Bacteria</taxon>
        <taxon>Bacillati</taxon>
        <taxon>Bacillota</taxon>
        <taxon>Bacilli</taxon>
        <taxon>Lactobacillales</taxon>
        <taxon>Lactobacillaceae</taxon>
        <taxon>Latilactobacillus</taxon>
    </lineage>
</organism>
<protein>
    <recommendedName>
        <fullName evidence="1">tRNA modification GTPase MnmE</fullName>
        <ecNumber evidence="1">3.6.-.-</ecNumber>
    </recommendedName>
</protein>
<keyword id="KW-0963">Cytoplasm</keyword>
<keyword id="KW-0342">GTP-binding</keyword>
<keyword id="KW-0378">Hydrolase</keyword>
<keyword id="KW-0460">Magnesium</keyword>
<keyword id="KW-0479">Metal-binding</keyword>
<keyword id="KW-0547">Nucleotide-binding</keyword>
<keyword id="KW-0630">Potassium</keyword>
<keyword id="KW-1185">Reference proteome</keyword>
<keyword id="KW-0819">tRNA processing</keyword>
<reference key="1">
    <citation type="journal article" date="2005" name="Nat. Biotechnol.">
        <title>The complete genome sequence of the meat-borne lactic acid bacterium Lactobacillus sakei 23K.</title>
        <authorList>
            <person name="Chaillou S."/>
            <person name="Champomier-Verges M.-C."/>
            <person name="Cornet M."/>
            <person name="Crutz-Le Coq A.-M."/>
            <person name="Dudez A.-M."/>
            <person name="Martin V."/>
            <person name="Beaufils S."/>
            <person name="Darbon-Rongere E."/>
            <person name="Bossy R."/>
            <person name="Loux V."/>
            <person name="Zagorec M."/>
        </authorList>
    </citation>
    <scope>NUCLEOTIDE SEQUENCE [LARGE SCALE GENOMIC DNA]</scope>
    <source>
        <strain>23K</strain>
    </source>
</reference>
<name>MNME_LATSS</name>
<gene>
    <name evidence="1" type="primary">mnmE</name>
    <name evidence="1" type="synonym">trmE</name>
    <name type="ordered locus">LCA_1880</name>
</gene>